<gene>
    <name evidence="1" type="primary">groEL2</name>
    <name evidence="1" type="synonym">groL2</name>
    <name type="ordered locus">Pro_1589</name>
</gene>
<dbReference type="EC" id="5.6.1.7" evidence="1"/>
<dbReference type="EMBL" id="AE017126">
    <property type="protein sequence ID" value="AAQ00633.1"/>
    <property type="molecule type" value="Genomic_DNA"/>
</dbReference>
<dbReference type="RefSeq" id="NP_875980.1">
    <property type="nucleotide sequence ID" value="NC_005042.1"/>
</dbReference>
<dbReference type="SMR" id="Q7TV93"/>
<dbReference type="STRING" id="167539.Pro_1589"/>
<dbReference type="EnsemblBacteria" id="AAQ00633">
    <property type="protein sequence ID" value="AAQ00633"/>
    <property type="gene ID" value="Pro_1589"/>
</dbReference>
<dbReference type="KEGG" id="pma:Pro_1589"/>
<dbReference type="PATRIC" id="fig|167539.5.peg.1680"/>
<dbReference type="eggNOG" id="COG0459">
    <property type="taxonomic scope" value="Bacteria"/>
</dbReference>
<dbReference type="HOGENOM" id="CLU_016503_3_0_3"/>
<dbReference type="OrthoDB" id="9766614at2"/>
<dbReference type="Proteomes" id="UP000001420">
    <property type="component" value="Chromosome"/>
</dbReference>
<dbReference type="GO" id="GO:0005737">
    <property type="term" value="C:cytoplasm"/>
    <property type="evidence" value="ECO:0007669"/>
    <property type="project" value="UniProtKB-SubCell"/>
</dbReference>
<dbReference type="GO" id="GO:0005524">
    <property type="term" value="F:ATP binding"/>
    <property type="evidence" value="ECO:0007669"/>
    <property type="project" value="UniProtKB-UniRule"/>
</dbReference>
<dbReference type="GO" id="GO:0140662">
    <property type="term" value="F:ATP-dependent protein folding chaperone"/>
    <property type="evidence" value="ECO:0007669"/>
    <property type="project" value="InterPro"/>
</dbReference>
<dbReference type="GO" id="GO:0016853">
    <property type="term" value="F:isomerase activity"/>
    <property type="evidence" value="ECO:0007669"/>
    <property type="project" value="UniProtKB-KW"/>
</dbReference>
<dbReference type="GO" id="GO:0051082">
    <property type="term" value="F:unfolded protein binding"/>
    <property type="evidence" value="ECO:0007669"/>
    <property type="project" value="UniProtKB-UniRule"/>
</dbReference>
<dbReference type="GO" id="GO:0042026">
    <property type="term" value="P:protein refolding"/>
    <property type="evidence" value="ECO:0007669"/>
    <property type="project" value="UniProtKB-UniRule"/>
</dbReference>
<dbReference type="CDD" id="cd03344">
    <property type="entry name" value="GroEL"/>
    <property type="match status" value="1"/>
</dbReference>
<dbReference type="FunFam" id="3.50.7.10:FF:000001">
    <property type="entry name" value="60 kDa chaperonin"/>
    <property type="match status" value="1"/>
</dbReference>
<dbReference type="Gene3D" id="3.50.7.10">
    <property type="entry name" value="GroEL"/>
    <property type="match status" value="1"/>
</dbReference>
<dbReference type="Gene3D" id="1.10.560.10">
    <property type="entry name" value="GroEL-like equatorial domain"/>
    <property type="match status" value="1"/>
</dbReference>
<dbReference type="Gene3D" id="3.30.260.10">
    <property type="entry name" value="TCP-1-like chaperonin intermediate domain"/>
    <property type="match status" value="1"/>
</dbReference>
<dbReference type="HAMAP" id="MF_00600">
    <property type="entry name" value="CH60"/>
    <property type="match status" value="1"/>
</dbReference>
<dbReference type="InterPro" id="IPR018370">
    <property type="entry name" value="Chaperonin_Cpn60_CS"/>
</dbReference>
<dbReference type="InterPro" id="IPR001844">
    <property type="entry name" value="Cpn60/GroEL"/>
</dbReference>
<dbReference type="InterPro" id="IPR002423">
    <property type="entry name" value="Cpn60/GroEL/TCP-1"/>
</dbReference>
<dbReference type="InterPro" id="IPR027409">
    <property type="entry name" value="GroEL-like_apical_dom_sf"/>
</dbReference>
<dbReference type="InterPro" id="IPR027413">
    <property type="entry name" value="GROEL-like_equatorial_sf"/>
</dbReference>
<dbReference type="InterPro" id="IPR027410">
    <property type="entry name" value="TCP-1-like_intermed_sf"/>
</dbReference>
<dbReference type="NCBIfam" id="TIGR02348">
    <property type="entry name" value="GroEL"/>
    <property type="match status" value="1"/>
</dbReference>
<dbReference type="NCBIfam" id="NF000592">
    <property type="entry name" value="PRK00013.1"/>
    <property type="match status" value="1"/>
</dbReference>
<dbReference type="NCBIfam" id="NF009487">
    <property type="entry name" value="PRK12849.1"/>
    <property type="match status" value="1"/>
</dbReference>
<dbReference type="NCBIfam" id="NF009488">
    <property type="entry name" value="PRK12850.1"/>
    <property type="match status" value="1"/>
</dbReference>
<dbReference type="NCBIfam" id="NF009489">
    <property type="entry name" value="PRK12851.1"/>
    <property type="match status" value="1"/>
</dbReference>
<dbReference type="PANTHER" id="PTHR45633">
    <property type="entry name" value="60 KDA HEAT SHOCK PROTEIN, MITOCHONDRIAL"/>
    <property type="match status" value="1"/>
</dbReference>
<dbReference type="Pfam" id="PF00118">
    <property type="entry name" value="Cpn60_TCP1"/>
    <property type="match status" value="1"/>
</dbReference>
<dbReference type="PRINTS" id="PR00298">
    <property type="entry name" value="CHAPERONIN60"/>
</dbReference>
<dbReference type="SUPFAM" id="SSF52029">
    <property type="entry name" value="GroEL apical domain-like"/>
    <property type="match status" value="1"/>
</dbReference>
<dbReference type="SUPFAM" id="SSF48592">
    <property type="entry name" value="GroEL equatorial domain-like"/>
    <property type="match status" value="2"/>
</dbReference>
<dbReference type="PROSITE" id="PS00296">
    <property type="entry name" value="CHAPERONINS_CPN60"/>
    <property type="match status" value="1"/>
</dbReference>
<keyword id="KW-0067">ATP-binding</keyword>
<keyword id="KW-0143">Chaperone</keyword>
<keyword id="KW-0963">Cytoplasm</keyword>
<keyword id="KW-0413">Isomerase</keyword>
<keyword id="KW-0547">Nucleotide-binding</keyword>
<keyword id="KW-1185">Reference proteome</keyword>
<accession>Q7TV93</accession>
<reference key="1">
    <citation type="journal article" date="2003" name="Proc. Natl. Acad. Sci. U.S.A.">
        <title>Genome sequence of the cyanobacterium Prochlorococcus marinus SS120, a nearly minimal oxyphototrophic genome.</title>
        <authorList>
            <person name="Dufresne A."/>
            <person name="Salanoubat M."/>
            <person name="Partensky F."/>
            <person name="Artiguenave F."/>
            <person name="Axmann I.M."/>
            <person name="Barbe V."/>
            <person name="Duprat S."/>
            <person name="Galperin M.Y."/>
            <person name="Koonin E.V."/>
            <person name="Le Gall F."/>
            <person name="Makarova K.S."/>
            <person name="Ostrowski M."/>
            <person name="Oztas S."/>
            <person name="Robert C."/>
            <person name="Rogozin I.B."/>
            <person name="Scanlan D.J."/>
            <person name="Tandeau de Marsac N."/>
            <person name="Weissenbach J."/>
            <person name="Wincker P."/>
            <person name="Wolf Y.I."/>
            <person name="Hess W.R."/>
        </authorList>
    </citation>
    <scope>NUCLEOTIDE SEQUENCE [LARGE SCALE GENOMIC DNA]</scope>
    <source>
        <strain>SARG / CCMP1375 / SS120</strain>
    </source>
</reference>
<comment type="function">
    <text evidence="1">Together with its co-chaperonin GroES, plays an essential role in assisting protein folding. The GroEL-GroES system forms a nano-cage that allows encapsulation of the non-native substrate proteins and provides a physical environment optimized to promote and accelerate protein folding.</text>
</comment>
<comment type="catalytic activity">
    <reaction evidence="1">
        <text>ATP + H2O + a folded polypeptide = ADP + phosphate + an unfolded polypeptide.</text>
        <dbReference type="EC" id="5.6.1.7"/>
    </reaction>
</comment>
<comment type="subunit">
    <text evidence="1">Forms a cylinder of 14 subunits composed of two heptameric rings stacked back-to-back. Interacts with the co-chaperonin GroES.</text>
</comment>
<comment type="subcellular location">
    <subcellularLocation>
        <location evidence="1">Cytoplasm</location>
    </subcellularLocation>
</comment>
<comment type="similarity">
    <text evidence="1">Belongs to the chaperonin (HSP60) family.</text>
</comment>
<protein>
    <recommendedName>
        <fullName evidence="1">Chaperonin GroEL 2</fullName>
        <ecNumber evidence="1">5.6.1.7</ecNumber>
    </recommendedName>
    <alternativeName>
        <fullName evidence="1">60 kDa chaperonin 2</fullName>
    </alternativeName>
    <alternativeName>
        <fullName evidence="1">Chaperonin-60 2</fullName>
        <shortName evidence="1">Cpn60 2</shortName>
    </alternativeName>
</protein>
<organism>
    <name type="scientific">Prochlorococcus marinus (strain SARG / CCMP1375 / SS120)</name>
    <dbReference type="NCBI Taxonomy" id="167539"/>
    <lineage>
        <taxon>Bacteria</taxon>
        <taxon>Bacillati</taxon>
        <taxon>Cyanobacteriota</taxon>
        <taxon>Cyanophyceae</taxon>
        <taxon>Synechococcales</taxon>
        <taxon>Prochlorococcaceae</taxon>
        <taxon>Prochlorococcus</taxon>
    </lineage>
</organism>
<proteinExistence type="inferred from homology"/>
<sequence>MAKRIIYNEQARRALERGIDILAESVAVTLGPKGRNVVLEKKFGAPQIINDGVTIAKEIELEDHIENTGVALIRQAASKTNDAAGDGTTTATVLAHAMVKAGLRNVAAGANAITLKKGIDKATDFLVKKIQEQAKPISDSNAIAQCGTIAAGNDEEVGQMIADAMDKVGKEGVISLEEGKSMETELEVTEGMRFDKGYISPYFATDTERMEAVLDEPYILLTDKKIGLVQDLVPVLEQIAKTGKPLLIVAEDIEKEALATLVVNRLRGVLNVAAVKAPGFGDRRKAMLEDMAVLTNGQLITEDAGLKLENATLDMLGTSRRVTINKDTTTIVAEGNEAAVQARCEQIKKQMDETDSTYDKEKLQERLAKLAGGVAVVKVGAATETEMKDKKLRLEDAINATKAAVEEGIVPGGGTTLAHLASEVHSWAASSLSGEELIGANIVEAALTAPLMRIAENAGANGAVIAEHVKSKPLNDGYNAASGEYVDMLSAGIVDPAKVTRSGLQNASSIAGMVLTTECIVADLPEKKDVASGGAGGGMGGDFDY</sequence>
<name>CH602_PROMA</name>
<feature type="chain" id="PRO_0000063481" description="Chaperonin GroEL 2">
    <location>
        <begin position="1"/>
        <end position="545"/>
    </location>
</feature>
<feature type="binding site" evidence="1">
    <location>
        <begin position="29"/>
        <end position="32"/>
    </location>
    <ligand>
        <name>ATP</name>
        <dbReference type="ChEBI" id="CHEBI:30616"/>
    </ligand>
</feature>
<feature type="binding site" evidence="1">
    <location>
        <begin position="86"/>
        <end position="90"/>
    </location>
    <ligand>
        <name>ATP</name>
        <dbReference type="ChEBI" id="CHEBI:30616"/>
    </ligand>
</feature>
<feature type="binding site" evidence="1">
    <location>
        <position position="413"/>
    </location>
    <ligand>
        <name>ATP</name>
        <dbReference type="ChEBI" id="CHEBI:30616"/>
    </ligand>
</feature>
<feature type="binding site" evidence="1">
    <location>
        <begin position="479"/>
        <end position="481"/>
    </location>
    <ligand>
        <name>ATP</name>
        <dbReference type="ChEBI" id="CHEBI:30616"/>
    </ligand>
</feature>
<feature type="binding site" evidence="1">
    <location>
        <position position="495"/>
    </location>
    <ligand>
        <name>ATP</name>
        <dbReference type="ChEBI" id="CHEBI:30616"/>
    </ligand>
</feature>
<evidence type="ECO:0000255" key="1">
    <source>
        <dbReference type="HAMAP-Rule" id="MF_00600"/>
    </source>
</evidence>